<feature type="chain" id="PRO_0000058513" description="Ribonucleases P/MRP protein subunit POP1">
    <location>
        <begin position="1"/>
        <end position="1024"/>
    </location>
</feature>
<feature type="region of interest" description="Disordered" evidence="1">
    <location>
        <begin position="1"/>
        <end position="95"/>
    </location>
</feature>
<feature type="region of interest" description="Disordered" evidence="1">
    <location>
        <begin position="365"/>
        <end position="399"/>
    </location>
</feature>
<feature type="region of interest" description="Disordered" evidence="1">
    <location>
        <begin position="722"/>
        <end position="762"/>
    </location>
</feature>
<feature type="region of interest" description="Disordered" evidence="1">
    <location>
        <begin position="773"/>
        <end position="792"/>
    </location>
</feature>
<feature type="region of interest" description="Disordered" evidence="1">
    <location>
        <begin position="819"/>
        <end position="838"/>
    </location>
</feature>
<feature type="region of interest" description="Disordered" evidence="1">
    <location>
        <begin position="911"/>
        <end position="936"/>
    </location>
</feature>
<feature type="compositionally biased region" description="Basic residues" evidence="1">
    <location>
        <begin position="1"/>
        <end position="14"/>
    </location>
</feature>
<feature type="compositionally biased region" description="Polar residues" evidence="1">
    <location>
        <begin position="15"/>
        <end position="24"/>
    </location>
</feature>
<feature type="compositionally biased region" description="Polar residues" evidence="1">
    <location>
        <begin position="53"/>
        <end position="62"/>
    </location>
</feature>
<feature type="compositionally biased region" description="Basic and acidic residues" evidence="1">
    <location>
        <begin position="387"/>
        <end position="399"/>
    </location>
</feature>
<feature type="compositionally biased region" description="Basic residues" evidence="1">
    <location>
        <begin position="911"/>
        <end position="923"/>
    </location>
</feature>
<feature type="modified residue" description="Phosphoserine" evidence="13 17">
    <location>
        <position position="367"/>
    </location>
</feature>
<feature type="modified residue" description="Phosphoserine" evidence="12 17">
    <location>
        <position position="584"/>
    </location>
</feature>
<feature type="modified residue" description="Phosphoserine" evidence="16">
    <location>
        <position position="729"/>
    </location>
</feature>
<feature type="modified residue" description="Phosphoserine" evidence="13 14 15 16 17">
    <location>
        <position position="730"/>
    </location>
</feature>
<feature type="sequence variant" id="VAR_057746" description="In dbSNP:rs3824145.">
    <original>S</original>
    <variation>L</variation>
    <location>
        <position position="127"/>
    </location>
</feature>
<feature type="sequence variant" id="VAR_057747" description="In dbSNP:rs2306131.">
    <original>E</original>
    <variation>A</variation>
    <location>
        <position position="460"/>
    </location>
</feature>
<feature type="sequence variant" id="VAR_078770" description="In ANXD2; dbSNP:rs1060505025." evidence="6">
    <original>D</original>
    <variation>Y</variation>
    <location>
        <position position="511"/>
    </location>
</feature>
<feature type="sequence variant" id="VAR_057748" description="In dbSNP:rs17184326.">
    <original>K</original>
    <variation>N</variation>
    <location>
        <position position="522"/>
    </location>
</feature>
<feature type="sequence variant" id="VAR_078771" description="In ANXD2; dbSNP:rs1060505023." evidence="5 6">
    <original>P</original>
    <variation>S</variation>
    <location>
        <position position="582"/>
    </location>
</feature>
<feature type="sequence variant" id="VAR_067755" description="In ANXD2; dbSNP:rs374828868." evidence="4">
    <original>G</original>
    <variation>E</variation>
    <location>
        <position position="583"/>
    </location>
</feature>
<feature type="sequence variant" id="VAR_036232" description="In a breast cancer sample; somatic mutation." evidence="3">
    <original>E</original>
    <variation>Q</variation>
    <location>
        <position position="675"/>
    </location>
</feature>
<feature type="sequence variant" id="VAR_057749" description="In dbSNP:rs17856355.">
    <original>L</original>
    <variation>V</variation>
    <location>
        <position position="994"/>
    </location>
</feature>
<sequence length="1024" mass="114709">MSNAKERKHAKKMRNQPTNVTLSSGFVADRGVKHHSGGEKPFQAQKQEPHPGTSRQRQTRVNPHSLPDPEVNEQSSSKGMFRKKGGWKAGPEGTSQEIPKYITASTFAQARAAEISAMLKAVTQKSSNSLVFQTLPRHMRRRAMSHNVKRLPRRLQEIAQKEAEKAVHQKKEHSKNKCHKARRCHMNRTLEFNRRQKKNIWLETHIWHAKRFHMVKKWGYCLGERPTVKSHRACYRAMTNRCLLQDLSYYCCLELKGKEEEILKALSGMCNIDTGLTFAAVHCLSGKRQGSLVLYRVNKYPREMLGPVTFIWKSQRTPGDPSESRQLWIWLHPTLKQDILEEIKAACQCVEPIKSAVCIADPLPTPSQEKSQTELPDEKIGKKRKRKDDGENAKPIKKIIGDGTRDPCLPYSWISPTTGIIISDLTMEMNRFRLIGPLSHSILTEAIKAASVHTVGEDTEETPHRWWIETCKKPDSVSLHCRQEAIFELLGGITSPAEIPAGTILGLTVGDPRINLPQKKSKALPNPEKCQDNEKVRQLLLEGVPVECTHSFIWNQDICKSVTENKISDQDLNRMRSELLVPGSQLILGPHESKIPILLIQQPGKVTGEDRLGWGSGWDVLLPKGWGMAFWIPFIYRGVRVGGLKESAVHSQYKRSPNVPGDFPDCPAGMLFAEEQAKNLLEKYKRRPPAKRPNYVKLGTLAPFCCPWEQLTQDWESRVQAYEEPSVASSPNGKESDLRRSEVPCAPMPKKTHQPSDEVGTSIEHPREAEEVMDAGCQESAGPERITDQEASENHVAATGSHLCVLRSRKLLKQLSAWCGPSSEDSRGGRRAPGRGQQGLTREACLSILGHFPRALVWVSLSLLSKGSPEPHTMICVPAKEDFLQLHEDWHYCGPQESKHSDPFRSKILKQKEKKKREKRQKPGRASSDGPAGEEPVAGQEALTLGLWSGPLPRVTLHCSRTLLGFVTQGDFSMAVGCGEALGFVSLTGLLDMLSSQPAAQRGLVLLRPPASLQYRFARIAIEV</sequence>
<proteinExistence type="evidence at protein level"/>
<organism>
    <name type="scientific">Homo sapiens</name>
    <name type="common">Human</name>
    <dbReference type="NCBI Taxonomy" id="9606"/>
    <lineage>
        <taxon>Eukaryota</taxon>
        <taxon>Metazoa</taxon>
        <taxon>Chordata</taxon>
        <taxon>Craniata</taxon>
        <taxon>Vertebrata</taxon>
        <taxon>Euteleostomi</taxon>
        <taxon>Mammalia</taxon>
        <taxon>Eutheria</taxon>
        <taxon>Euarchontoglires</taxon>
        <taxon>Primates</taxon>
        <taxon>Haplorrhini</taxon>
        <taxon>Catarrhini</taxon>
        <taxon>Hominidae</taxon>
        <taxon>Homo</taxon>
    </lineage>
</organism>
<dbReference type="EMBL" id="AK291434">
    <property type="protein sequence ID" value="BAF84123.1"/>
    <property type="molecule type" value="mRNA"/>
</dbReference>
<dbReference type="EMBL" id="CH471060">
    <property type="protein sequence ID" value="EAW91776.1"/>
    <property type="molecule type" value="Genomic_DNA"/>
</dbReference>
<dbReference type="EMBL" id="X99302">
    <property type="protein sequence ID" value="CAA67684.1"/>
    <property type="molecule type" value="mRNA"/>
</dbReference>
<dbReference type="EMBL" id="D31765">
    <property type="protein sequence ID" value="BAA06543.1"/>
    <property type="molecule type" value="mRNA"/>
</dbReference>
<dbReference type="CCDS" id="CCDS6277.1"/>
<dbReference type="RefSeq" id="NP_001139332.1">
    <property type="nucleotide sequence ID" value="NM_001145860.2"/>
</dbReference>
<dbReference type="RefSeq" id="NP_001139333.1">
    <property type="nucleotide sequence ID" value="NM_001145861.2"/>
</dbReference>
<dbReference type="RefSeq" id="NP_055844.2">
    <property type="nucleotide sequence ID" value="NM_015029.3"/>
</dbReference>
<dbReference type="PDB" id="6AHR">
    <property type="method" value="EM"/>
    <property type="resolution" value="3.92 A"/>
    <property type="chains" value="B=1-1024"/>
</dbReference>
<dbReference type="PDB" id="6AHU">
    <property type="method" value="EM"/>
    <property type="resolution" value="3.66 A"/>
    <property type="chains" value="B=1-1024"/>
</dbReference>
<dbReference type="PDBsum" id="6AHR"/>
<dbReference type="PDBsum" id="6AHU"/>
<dbReference type="EMDB" id="EMD-9626"/>
<dbReference type="EMDB" id="EMD-9627"/>
<dbReference type="SMR" id="Q99575"/>
<dbReference type="BioGRID" id="116140">
    <property type="interactions" value="304"/>
</dbReference>
<dbReference type="ComplexPortal" id="CPX-2876">
    <property type="entry name" value="Ribonuclease MRP complex"/>
</dbReference>
<dbReference type="ComplexPortal" id="CPX-2877">
    <property type="entry name" value="Nucleolar ribonuclease P complex"/>
</dbReference>
<dbReference type="CORUM" id="Q99575"/>
<dbReference type="FunCoup" id="Q99575">
    <property type="interactions" value="2287"/>
</dbReference>
<dbReference type="IntAct" id="Q99575">
    <property type="interactions" value="140"/>
</dbReference>
<dbReference type="MINT" id="Q99575"/>
<dbReference type="STRING" id="9606.ENSP00000385787"/>
<dbReference type="GlyGen" id="Q99575">
    <property type="glycosylation" value="4 sites, 1 N-linked glycan (1 site), 1 O-linked glycan (1 site)"/>
</dbReference>
<dbReference type="iPTMnet" id="Q99575"/>
<dbReference type="MetOSite" id="Q99575"/>
<dbReference type="PhosphoSitePlus" id="Q99575"/>
<dbReference type="SwissPalm" id="Q99575"/>
<dbReference type="BioMuta" id="POP1"/>
<dbReference type="DMDM" id="13124451"/>
<dbReference type="jPOST" id="Q99575"/>
<dbReference type="MassIVE" id="Q99575"/>
<dbReference type="PaxDb" id="9606-ENSP00000385787"/>
<dbReference type="PeptideAtlas" id="Q99575"/>
<dbReference type="ProteomicsDB" id="78334"/>
<dbReference type="Pumba" id="Q99575"/>
<dbReference type="Antibodypedia" id="26061">
    <property type="antibodies" value="91 antibodies from 17 providers"/>
</dbReference>
<dbReference type="DNASU" id="10940"/>
<dbReference type="Ensembl" id="ENST00000349693.3">
    <property type="protein sequence ID" value="ENSP00000339529.3"/>
    <property type="gene ID" value="ENSG00000104356.11"/>
</dbReference>
<dbReference type="Ensembl" id="ENST00000401707.7">
    <property type="protein sequence ID" value="ENSP00000385787.2"/>
    <property type="gene ID" value="ENSG00000104356.11"/>
</dbReference>
<dbReference type="GeneID" id="10940"/>
<dbReference type="KEGG" id="hsa:10940"/>
<dbReference type="MANE-Select" id="ENST00000401707.7">
    <property type="protein sequence ID" value="ENSP00000385787.2"/>
    <property type="RefSeq nucleotide sequence ID" value="NM_001145860.2"/>
    <property type="RefSeq protein sequence ID" value="NP_001139332.1"/>
</dbReference>
<dbReference type="UCSC" id="uc003yij.5">
    <property type="organism name" value="human"/>
</dbReference>
<dbReference type="AGR" id="HGNC:30129"/>
<dbReference type="CTD" id="10940"/>
<dbReference type="DisGeNET" id="10940"/>
<dbReference type="GeneCards" id="POP1"/>
<dbReference type="HGNC" id="HGNC:30129">
    <property type="gene designation" value="POP1"/>
</dbReference>
<dbReference type="HPA" id="ENSG00000104356">
    <property type="expression patterns" value="Low tissue specificity"/>
</dbReference>
<dbReference type="MalaCards" id="POP1"/>
<dbReference type="MIM" id="602486">
    <property type="type" value="gene"/>
</dbReference>
<dbReference type="MIM" id="617396">
    <property type="type" value="phenotype"/>
</dbReference>
<dbReference type="neXtProt" id="NX_Q99575"/>
<dbReference type="OpenTargets" id="ENSG00000104356"/>
<dbReference type="Orphanet" id="93347">
    <property type="disease" value="Anauxetic dysplasia"/>
</dbReference>
<dbReference type="PharmGKB" id="PA134907403"/>
<dbReference type="VEuPathDB" id="HostDB:ENSG00000104356"/>
<dbReference type="eggNOG" id="KOG3322">
    <property type="taxonomic scope" value="Eukaryota"/>
</dbReference>
<dbReference type="GeneTree" id="ENSGT00390000017478"/>
<dbReference type="HOGENOM" id="CLU_007205_1_2_1"/>
<dbReference type="InParanoid" id="Q99575"/>
<dbReference type="OMA" id="KALSPMC"/>
<dbReference type="OrthoDB" id="442863at2759"/>
<dbReference type="PAN-GO" id="Q99575">
    <property type="GO annotations" value="4 GO annotations based on evolutionary models"/>
</dbReference>
<dbReference type="PhylomeDB" id="Q99575"/>
<dbReference type="TreeFam" id="TF314236"/>
<dbReference type="BRENDA" id="3.1.26.5">
    <property type="organism ID" value="2681"/>
</dbReference>
<dbReference type="PathwayCommons" id="Q99575"/>
<dbReference type="Reactome" id="R-HSA-6784531">
    <property type="pathway name" value="tRNA processing in the nucleus"/>
</dbReference>
<dbReference type="SignaLink" id="Q99575"/>
<dbReference type="BioGRID-ORCS" id="10940">
    <property type="hits" value="715 hits in 1160 CRISPR screens"/>
</dbReference>
<dbReference type="CD-CODE" id="232F8A39">
    <property type="entry name" value="P-body"/>
</dbReference>
<dbReference type="CD-CODE" id="91857CE7">
    <property type="entry name" value="Nucleolus"/>
</dbReference>
<dbReference type="ChiTaRS" id="POP1">
    <property type="organism name" value="human"/>
</dbReference>
<dbReference type="GeneWiki" id="POP1_(gene)"/>
<dbReference type="GenomeRNAi" id="10940"/>
<dbReference type="Pharos" id="Q99575">
    <property type="development level" value="Tbio"/>
</dbReference>
<dbReference type="PRO" id="PR:Q99575"/>
<dbReference type="Proteomes" id="UP000005640">
    <property type="component" value="Chromosome 8"/>
</dbReference>
<dbReference type="RNAct" id="Q99575">
    <property type="molecule type" value="protein"/>
</dbReference>
<dbReference type="Bgee" id="ENSG00000104356">
    <property type="expression patterns" value="Expressed in male germ line stem cell (sensu Vertebrata) in testis and 109 other cell types or tissues"/>
</dbReference>
<dbReference type="ExpressionAtlas" id="Q99575">
    <property type="expression patterns" value="baseline and differential"/>
</dbReference>
<dbReference type="GO" id="GO:0005615">
    <property type="term" value="C:extracellular space"/>
    <property type="evidence" value="ECO:0007005"/>
    <property type="project" value="UniProtKB"/>
</dbReference>
<dbReference type="GO" id="GO:0030681">
    <property type="term" value="C:multimeric ribonuclease P complex"/>
    <property type="evidence" value="ECO:0000314"/>
    <property type="project" value="UniProtKB"/>
</dbReference>
<dbReference type="GO" id="GO:0005655">
    <property type="term" value="C:nucleolar ribonuclease P complex"/>
    <property type="evidence" value="ECO:0000314"/>
    <property type="project" value="UniProtKB"/>
</dbReference>
<dbReference type="GO" id="GO:0005730">
    <property type="term" value="C:nucleolus"/>
    <property type="evidence" value="ECO:0000314"/>
    <property type="project" value="HPA"/>
</dbReference>
<dbReference type="GO" id="GO:0005654">
    <property type="term" value="C:nucleoplasm"/>
    <property type="evidence" value="ECO:0000304"/>
    <property type="project" value="Reactome"/>
</dbReference>
<dbReference type="GO" id="GO:0000172">
    <property type="term" value="C:ribonuclease MRP complex"/>
    <property type="evidence" value="ECO:0000314"/>
    <property type="project" value="UniProtKB"/>
</dbReference>
<dbReference type="GO" id="GO:0004526">
    <property type="term" value="F:ribonuclease P activity"/>
    <property type="evidence" value="ECO:0007669"/>
    <property type="project" value="UniProtKB-EC"/>
</dbReference>
<dbReference type="GO" id="GO:0033204">
    <property type="term" value="F:ribonuclease P RNA binding"/>
    <property type="evidence" value="ECO:0000314"/>
    <property type="project" value="UniProtKB"/>
</dbReference>
<dbReference type="GO" id="GO:0003723">
    <property type="term" value="F:RNA binding"/>
    <property type="evidence" value="ECO:0007005"/>
    <property type="project" value="UniProtKB"/>
</dbReference>
<dbReference type="GO" id="GO:0001682">
    <property type="term" value="P:tRNA 5'-leader removal"/>
    <property type="evidence" value="ECO:0000314"/>
    <property type="project" value="UniProtKB"/>
</dbReference>
<dbReference type="GO" id="GO:0016078">
    <property type="term" value="P:tRNA decay"/>
    <property type="evidence" value="ECO:0000314"/>
    <property type="project" value="UniProtKB"/>
</dbReference>
<dbReference type="GO" id="GO:0008033">
    <property type="term" value="P:tRNA processing"/>
    <property type="evidence" value="ECO:0000318"/>
    <property type="project" value="GO_Central"/>
</dbReference>
<dbReference type="InterPro" id="IPR039182">
    <property type="entry name" value="Pop1"/>
</dbReference>
<dbReference type="InterPro" id="IPR055079">
    <property type="entry name" value="POP1_C"/>
</dbReference>
<dbReference type="InterPro" id="IPR009723">
    <property type="entry name" value="Pop1_N"/>
</dbReference>
<dbReference type="InterPro" id="IPR012590">
    <property type="entry name" value="POPLD_dom"/>
</dbReference>
<dbReference type="PANTHER" id="PTHR22731">
    <property type="entry name" value="RIBONUCLEASES P/MRP PROTEIN SUBUNIT POP1"/>
    <property type="match status" value="1"/>
</dbReference>
<dbReference type="PANTHER" id="PTHR22731:SF3">
    <property type="entry name" value="RIBONUCLEASES P_MRP PROTEIN SUBUNIT POP1"/>
    <property type="match status" value="1"/>
</dbReference>
<dbReference type="Pfam" id="PF22770">
    <property type="entry name" value="POP1_C"/>
    <property type="match status" value="1"/>
</dbReference>
<dbReference type="Pfam" id="PF06978">
    <property type="entry name" value="POP1_N"/>
    <property type="match status" value="2"/>
</dbReference>
<dbReference type="Pfam" id="PF08170">
    <property type="entry name" value="POPLD"/>
    <property type="match status" value="1"/>
</dbReference>
<accession>Q99575</accession>
<accession>A8K5W9</accession>
<accession>Q15037</accession>
<keyword id="KW-0002">3D-structure</keyword>
<keyword id="KW-0225">Disease variant</keyword>
<keyword id="KW-0242">Dwarfism</keyword>
<keyword id="KW-0539">Nucleus</keyword>
<keyword id="KW-0597">Phosphoprotein</keyword>
<keyword id="KW-1267">Proteomics identification</keyword>
<keyword id="KW-1185">Reference proteome</keyword>
<keyword id="KW-0694">RNA-binding</keyword>
<keyword id="KW-0819">tRNA processing</keyword>
<protein>
    <recommendedName>
        <fullName>Ribonucleases P/MRP protein subunit POP1</fullName>
        <shortName>hPOP1</shortName>
    </recommendedName>
</protein>
<name>POP1_HUMAN</name>
<evidence type="ECO:0000256" key="1">
    <source>
        <dbReference type="SAM" id="MobiDB-lite"/>
    </source>
</evidence>
<evidence type="ECO:0000269" key="2">
    <source>
    </source>
</evidence>
<evidence type="ECO:0000269" key="3">
    <source>
    </source>
</evidence>
<evidence type="ECO:0000269" key="4">
    <source>
    </source>
</evidence>
<evidence type="ECO:0000269" key="5">
    <source>
    </source>
</evidence>
<evidence type="ECO:0000269" key="6">
    <source>
    </source>
</evidence>
<evidence type="ECO:0000269" key="7">
    <source>
    </source>
</evidence>
<evidence type="ECO:0000269" key="8">
    <source>
    </source>
</evidence>
<evidence type="ECO:0000269" key="9">
    <source>
    </source>
</evidence>
<evidence type="ECO:0007744" key="10">
    <source>
        <dbReference type="PDB" id="6AHR"/>
    </source>
</evidence>
<evidence type="ECO:0007744" key="11">
    <source>
        <dbReference type="PDB" id="6AHU"/>
    </source>
</evidence>
<evidence type="ECO:0007744" key="12">
    <source>
    </source>
</evidence>
<evidence type="ECO:0007744" key="13">
    <source>
    </source>
</evidence>
<evidence type="ECO:0007744" key="14">
    <source>
    </source>
</evidence>
<evidence type="ECO:0007744" key="15">
    <source>
    </source>
</evidence>
<evidence type="ECO:0007744" key="16">
    <source>
    </source>
</evidence>
<evidence type="ECO:0007744" key="17">
    <source>
    </source>
</evidence>
<gene>
    <name type="primary">POP1</name>
    <name type="synonym">KIAA0061</name>
</gene>
<comment type="function">
    <text evidence="7 8 9">Component of ribonuclease P, a ribonucleoprotein complex that generates mature tRNA molecules by cleaving their 5'-ends (PubMed:30454648, PubMed:8918471). Also a component of the MRP ribonuclease complex, which cleaves pre-rRNA sequences (PubMed:28115465).</text>
</comment>
<comment type="subunit">
    <text evidence="2 7 8 9">Component of nuclear RNase P and RNase MRP ribonucleoproteins (PubMed:16723659, PubMed:8918471). RNase P consists of a catalytic RNA moiety and 10 different protein chains; POP1, POP4, POP5, POP7, RPP14, RPP21, RPP25, RPP30, RPP38 and RPP40 (PubMed:16723659, PubMed:30454648). Within the RNase P complex, POP1, POP7 and RPP25 form the 'finger' subcomplex, POP5, RPP14, RPP40 and homodimeric RPP30 form the 'palm' subcomplex, and RPP21, POP4 and RPP38 form the 'wrist' subcomplex. All subunits of the RNase P complex interact with the catalytic RNA (PubMed:30454648). Several subunits of RNase P are also part of the RNase MRP complex. RNase MRP consists of a catalytic RNA moiety and about 8 protein subunits; POP1, POP7, RPP25, RPP30, RPP38, RPP40 and possibly also POP4 and POP5 (PubMed:16723659, PubMed:28115465).</text>
</comment>
<comment type="interaction">
    <interactant intactId="EBI-366741">
        <id>Q99575</id>
    </interactant>
    <interactant intactId="EBI-366477">
        <id>O95707</id>
        <label>POP4</label>
    </interactant>
    <organismsDiffer>false</organismsDiffer>
    <experiments>5</experiments>
</comment>
<comment type="interaction">
    <interactant intactId="EBI-366741">
        <id>Q99575</id>
    </interactant>
    <interactant intactId="EBI-366525">
        <id>Q969H6</id>
        <label>POP5</label>
    </interactant>
    <organismsDiffer>false</organismsDiffer>
    <experiments>3</experiments>
</comment>
<comment type="interaction">
    <interactant intactId="EBI-366741">
        <id>Q99575</id>
    </interactant>
    <interactant intactId="EBI-366570">
        <id>Q9BUL9</id>
        <label>RPP25</label>
    </interactant>
    <organismsDiffer>false</organismsDiffer>
    <experiments>4</experiments>
</comment>
<comment type="subcellular location">
    <subcellularLocation>
        <location evidence="9">Nucleus</location>
        <location evidence="9">Nucleolus</location>
    </subcellularLocation>
</comment>
<comment type="disease" evidence="4 5 6">
    <disease id="DI-04972">
        <name>Anauxetic dysplasia 2</name>
        <acronym>ANXD2</acronym>
        <description>An autosomal recessive spondyloepimetaphyseal dysplasia characterized by severe short stature of prenatal onset, very short adult height (less than 1 meter), hypodontia, midface hypoplasia, and mild intellectual disability.</description>
        <dbReference type="MIM" id="617396"/>
    </disease>
    <text>The disease is caused by variants affecting the gene represented in this entry.</text>
</comment>
<reference key="1">
    <citation type="journal article" date="2004" name="Nat. Genet.">
        <title>Complete sequencing and characterization of 21,243 full-length human cDNAs.</title>
        <authorList>
            <person name="Ota T."/>
            <person name="Suzuki Y."/>
            <person name="Nishikawa T."/>
            <person name="Otsuki T."/>
            <person name="Sugiyama T."/>
            <person name="Irie R."/>
            <person name="Wakamatsu A."/>
            <person name="Hayashi K."/>
            <person name="Sato H."/>
            <person name="Nagai K."/>
            <person name="Kimura K."/>
            <person name="Makita H."/>
            <person name="Sekine M."/>
            <person name="Obayashi M."/>
            <person name="Nishi T."/>
            <person name="Shibahara T."/>
            <person name="Tanaka T."/>
            <person name="Ishii S."/>
            <person name="Yamamoto J."/>
            <person name="Saito K."/>
            <person name="Kawai Y."/>
            <person name="Isono Y."/>
            <person name="Nakamura Y."/>
            <person name="Nagahari K."/>
            <person name="Murakami K."/>
            <person name="Yasuda T."/>
            <person name="Iwayanagi T."/>
            <person name="Wagatsuma M."/>
            <person name="Shiratori A."/>
            <person name="Sudo H."/>
            <person name="Hosoiri T."/>
            <person name="Kaku Y."/>
            <person name="Kodaira H."/>
            <person name="Kondo H."/>
            <person name="Sugawara M."/>
            <person name="Takahashi M."/>
            <person name="Kanda K."/>
            <person name="Yokoi T."/>
            <person name="Furuya T."/>
            <person name="Kikkawa E."/>
            <person name="Omura Y."/>
            <person name="Abe K."/>
            <person name="Kamihara K."/>
            <person name="Katsuta N."/>
            <person name="Sato K."/>
            <person name="Tanikawa M."/>
            <person name="Yamazaki M."/>
            <person name="Ninomiya K."/>
            <person name="Ishibashi T."/>
            <person name="Yamashita H."/>
            <person name="Murakawa K."/>
            <person name="Fujimori K."/>
            <person name="Tanai H."/>
            <person name="Kimata M."/>
            <person name="Watanabe M."/>
            <person name="Hiraoka S."/>
            <person name="Chiba Y."/>
            <person name="Ishida S."/>
            <person name="Ono Y."/>
            <person name="Takiguchi S."/>
            <person name="Watanabe S."/>
            <person name="Yosida M."/>
            <person name="Hotuta T."/>
            <person name="Kusano J."/>
            <person name="Kanehori K."/>
            <person name="Takahashi-Fujii A."/>
            <person name="Hara H."/>
            <person name="Tanase T.-O."/>
            <person name="Nomura Y."/>
            <person name="Togiya S."/>
            <person name="Komai F."/>
            <person name="Hara R."/>
            <person name="Takeuchi K."/>
            <person name="Arita M."/>
            <person name="Imose N."/>
            <person name="Musashino K."/>
            <person name="Yuuki H."/>
            <person name="Oshima A."/>
            <person name="Sasaki N."/>
            <person name="Aotsuka S."/>
            <person name="Yoshikawa Y."/>
            <person name="Matsunawa H."/>
            <person name="Ichihara T."/>
            <person name="Shiohata N."/>
            <person name="Sano S."/>
            <person name="Moriya S."/>
            <person name="Momiyama H."/>
            <person name="Satoh N."/>
            <person name="Takami S."/>
            <person name="Terashima Y."/>
            <person name="Suzuki O."/>
            <person name="Nakagawa S."/>
            <person name="Senoh A."/>
            <person name="Mizoguchi H."/>
            <person name="Goto Y."/>
            <person name="Shimizu F."/>
            <person name="Wakebe H."/>
            <person name="Hishigaki H."/>
            <person name="Watanabe T."/>
            <person name="Sugiyama A."/>
            <person name="Takemoto M."/>
            <person name="Kawakami B."/>
            <person name="Yamazaki M."/>
            <person name="Watanabe K."/>
            <person name="Kumagai A."/>
            <person name="Itakura S."/>
            <person name="Fukuzumi Y."/>
            <person name="Fujimori Y."/>
            <person name="Komiyama M."/>
            <person name="Tashiro H."/>
            <person name="Tanigami A."/>
            <person name="Fujiwara T."/>
            <person name="Ono T."/>
            <person name="Yamada K."/>
            <person name="Fujii Y."/>
            <person name="Ozaki K."/>
            <person name="Hirao M."/>
            <person name="Ohmori Y."/>
            <person name="Kawabata A."/>
            <person name="Hikiji T."/>
            <person name="Kobatake N."/>
            <person name="Inagaki H."/>
            <person name="Ikema Y."/>
            <person name="Okamoto S."/>
            <person name="Okitani R."/>
            <person name="Kawakami T."/>
            <person name="Noguchi S."/>
            <person name="Itoh T."/>
            <person name="Shigeta K."/>
            <person name="Senba T."/>
            <person name="Matsumura K."/>
            <person name="Nakajima Y."/>
            <person name="Mizuno T."/>
            <person name="Morinaga M."/>
            <person name="Sasaki M."/>
            <person name="Togashi T."/>
            <person name="Oyama M."/>
            <person name="Hata H."/>
            <person name="Watanabe M."/>
            <person name="Komatsu T."/>
            <person name="Mizushima-Sugano J."/>
            <person name="Satoh T."/>
            <person name="Shirai Y."/>
            <person name="Takahashi Y."/>
            <person name="Nakagawa K."/>
            <person name="Okumura K."/>
            <person name="Nagase T."/>
            <person name="Nomura N."/>
            <person name="Kikuchi H."/>
            <person name="Masuho Y."/>
            <person name="Yamashita R."/>
            <person name="Nakai K."/>
            <person name="Yada T."/>
            <person name="Nakamura Y."/>
            <person name="Ohara O."/>
            <person name="Isogai T."/>
            <person name="Sugano S."/>
        </authorList>
    </citation>
    <scope>NUCLEOTIDE SEQUENCE [LARGE SCALE MRNA]</scope>
    <source>
        <tissue>Brain</tissue>
    </source>
</reference>
<reference key="2">
    <citation type="submission" date="2005-07" db="EMBL/GenBank/DDBJ databases">
        <authorList>
            <person name="Mural R.J."/>
            <person name="Istrail S."/>
            <person name="Sutton G.G."/>
            <person name="Florea L."/>
            <person name="Halpern A.L."/>
            <person name="Mobarry C.M."/>
            <person name="Lippert R."/>
            <person name="Walenz B."/>
            <person name="Shatkay H."/>
            <person name="Dew I."/>
            <person name="Miller J.R."/>
            <person name="Flanigan M.J."/>
            <person name="Edwards N.J."/>
            <person name="Bolanos R."/>
            <person name="Fasulo D."/>
            <person name="Halldorsson B.V."/>
            <person name="Hannenhalli S."/>
            <person name="Turner R."/>
            <person name="Yooseph S."/>
            <person name="Lu F."/>
            <person name="Nusskern D.R."/>
            <person name="Shue B.C."/>
            <person name="Zheng X.H."/>
            <person name="Zhong F."/>
            <person name="Delcher A.L."/>
            <person name="Huson D.H."/>
            <person name="Kravitz S.A."/>
            <person name="Mouchard L."/>
            <person name="Reinert K."/>
            <person name="Remington K.A."/>
            <person name="Clark A.G."/>
            <person name="Waterman M.S."/>
            <person name="Eichler E.E."/>
            <person name="Adams M.D."/>
            <person name="Hunkapiller M.W."/>
            <person name="Myers E.W."/>
            <person name="Venter J.C."/>
        </authorList>
    </citation>
    <scope>NUCLEOTIDE SEQUENCE [LARGE SCALE GENOMIC DNA]</scope>
</reference>
<reference key="3">
    <citation type="journal article" date="1996" name="EMBO J.">
        <title>hPop1: an autoantigenic protein subunit shared by the human RNase P and RNase MRP ribonucleoproteins.</title>
        <authorList>
            <person name="Lygerou Z."/>
            <person name="Pluk H."/>
            <person name="Van Venrooij W.J."/>
            <person name="Seraphin B."/>
        </authorList>
    </citation>
    <scope>NUCLEOTIDE SEQUENCE [MRNA] OF 1-126</scope>
    <scope>FUNCTION</scope>
    <scope>SUBUNIT</scope>
    <scope>SUBCELLULAR LOCATION</scope>
</reference>
<reference key="4">
    <citation type="journal article" date="1994" name="DNA Res.">
        <title>Prediction of the coding sequences of unidentified human genes. II. The coding sequences of 40 new genes (KIAA0041-KIAA0080) deduced by analysis of cDNA clones from human cell line KG-1.</title>
        <authorList>
            <person name="Nomura N."/>
            <person name="Nagase T."/>
            <person name="Miyajima N."/>
            <person name="Sazuka T."/>
            <person name="Tanaka A."/>
            <person name="Sato S."/>
            <person name="Seki N."/>
            <person name="Kawarabayasi Y."/>
            <person name="Ishikawa K."/>
            <person name="Tabata S."/>
        </authorList>
    </citation>
    <scope>NUCLEOTIDE SEQUENCE [LARGE SCALE MRNA] OF 122-1024</scope>
    <source>
        <tissue>Bone marrow</tissue>
    </source>
</reference>
<reference key="5">
    <citation type="journal article" date="2006" name="Cell">
        <title>Global, in vivo, and site-specific phosphorylation dynamics in signaling networks.</title>
        <authorList>
            <person name="Olsen J.V."/>
            <person name="Blagoev B."/>
            <person name="Gnad F."/>
            <person name="Macek B."/>
            <person name="Kumar C."/>
            <person name="Mortensen P."/>
            <person name="Mann M."/>
        </authorList>
    </citation>
    <scope>IDENTIFICATION BY MASS SPECTROMETRY [LARGE SCALE ANALYSIS]</scope>
    <source>
        <tissue>Cervix carcinoma</tissue>
    </source>
</reference>
<reference key="6">
    <citation type="journal article" date="2006" name="RNA">
        <title>Differential association of protein subunits with the human RNase MRP and RNase P complexes.</title>
        <authorList>
            <person name="Welting T.J."/>
            <person name="Kikkert B.J."/>
            <person name="van Venrooij W.J."/>
            <person name="Pruijn G.J."/>
        </authorList>
    </citation>
    <scope>IDENTIFICATION IN RNASE P AND MRP COMPLEXES</scope>
    <scope>SUBUNIT</scope>
</reference>
<reference key="7">
    <citation type="journal article" date="2007" name="Science">
        <title>ATM and ATR substrate analysis reveals extensive protein networks responsive to DNA damage.</title>
        <authorList>
            <person name="Matsuoka S."/>
            <person name="Ballif B.A."/>
            <person name="Smogorzewska A."/>
            <person name="McDonald E.R. III"/>
            <person name="Hurov K.E."/>
            <person name="Luo J."/>
            <person name="Bakalarski C.E."/>
            <person name="Zhao Z."/>
            <person name="Solimini N."/>
            <person name="Lerenthal Y."/>
            <person name="Shiloh Y."/>
            <person name="Gygi S.P."/>
            <person name="Elledge S.J."/>
        </authorList>
    </citation>
    <scope>PHOSPHORYLATION [LARGE SCALE ANALYSIS] AT SER-584</scope>
    <scope>IDENTIFICATION BY MASS SPECTROMETRY [LARGE SCALE ANALYSIS]</scope>
    <source>
        <tissue>Embryonic kidney</tissue>
    </source>
</reference>
<reference key="8">
    <citation type="journal article" date="2008" name="Proc. Natl. Acad. Sci. U.S.A.">
        <title>A quantitative atlas of mitotic phosphorylation.</title>
        <authorList>
            <person name="Dephoure N."/>
            <person name="Zhou C."/>
            <person name="Villen J."/>
            <person name="Beausoleil S.A."/>
            <person name="Bakalarski C.E."/>
            <person name="Elledge S.J."/>
            <person name="Gygi S.P."/>
        </authorList>
    </citation>
    <scope>PHOSPHORYLATION [LARGE SCALE ANALYSIS] AT SER-367 AND SER-730</scope>
    <scope>IDENTIFICATION BY MASS SPECTROMETRY [LARGE SCALE ANALYSIS]</scope>
    <source>
        <tissue>Cervix carcinoma</tissue>
    </source>
</reference>
<reference key="9">
    <citation type="journal article" date="2009" name="Anal. Chem.">
        <title>Lys-N and trypsin cover complementary parts of the phosphoproteome in a refined SCX-based approach.</title>
        <authorList>
            <person name="Gauci S."/>
            <person name="Helbig A.O."/>
            <person name="Slijper M."/>
            <person name="Krijgsveld J."/>
            <person name="Heck A.J."/>
            <person name="Mohammed S."/>
        </authorList>
    </citation>
    <scope>IDENTIFICATION BY MASS SPECTROMETRY [LARGE SCALE ANALYSIS]</scope>
</reference>
<reference key="10">
    <citation type="journal article" date="2009" name="Sci. Signal.">
        <title>Quantitative phosphoproteomic analysis of T cell receptor signaling reveals system-wide modulation of protein-protein interactions.</title>
        <authorList>
            <person name="Mayya V."/>
            <person name="Lundgren D.H."/>
            <person name="Hwang S.-I."/>
            <person name="Rezaul K."/>
            <person name="Wu L."/>
            <person name="Eng J.K."/>
            <person name="Rodionov V."/>
            <person name="Han D.K."/>
        </authorList>
    </citation>
    <scope>PHOSPHORYLATION [LARGE SCALE ANALYSIS] AT SER-730</scope>
    <scope>IDENTIFICATION BY MASS SPECTROMETRY [LARGE SCALE ANALYSIS]</scope>
    <source>
        <tissue>Leukemic T-cell</tissue>
    </source>
</reference>
<reference key="11">
    <citation type="journal article" date="2010" name="Sci. Signal.">
        <title>Quantitative phosphoproteomics reveals widespread full phosphorylation site occupancy during mitosis.</title>
        <authorList>
            <person name="Olsen J.V."/>
            <person name="Vermeulen M."/>
            <person name="Santamaria A."/>
            <person name="Kumar C."/>
            <person name="Miller M.L."/>
            <person name="Jensen L.J."/>
            <person name="Gnad F."/>
            <person name="Cox J."/>
            <person name="Jensen T.S."/>
            <person name="Nigg E.A."/>
            <person name="Brunak S."/>
            <person name="Mann M."/>
        </authorList>
    </citation>
    <scope>PHOSPHORYLATION [LARGE SCALE ANALYSIS] AT SER-730</scope>
    <scope>IDENTIFICATION BY MASS SPECTROMETRY [LARGE SCALE ANALYSIS]</scope>
    <source>
        <tissue>Cervix carcinoma</tissue>
    </source>
</reference>
<reference key="12">
    <citation type="journal article" date="2011" name="BMC Syst. Biol.">
        <title>Initial characterization of the human central proteome.</title>
        <authorList>
            <person name="Burkard T.R."/>
            <person name="Planyavsky M."/>
            <person name="Kaupe I."/>
            <person name="Breitwieser F.P."/>
            <person name="Buerckstuemmer T."/>
            <person name="Bennett K.L."/>
            <person name="Superti-Furga G."/>
            <person name="Colinge J."/>
        </authorList>
    </citation>
    <scope>IDENTIFICATION BY MASS SPECTROMETRY [LARGE SCALE ANALYSIS]</scope>
</reference>
<reference key="13">
    <citation type="journal article" date="2011" name="PLoS Genet.">
        <title>Whole-exome re-sequencing in a family quartet identifies POP1 mutations as the cause of a novel skeletal dysplasia.</title>
        <authorList>
            <person name="Glazov E.A."/>
            <person name="Zankl A."/>
            <person name="Donskoi M."/>
            <person name="Kenna T.J."/>
            <person name="Thomas G.P."/>
            <person name="Clark G.R."/>
            <person name="Duncan E.L."/>
            <person name="Brown M.A."/>
        </authorList>
    </citation>
    <scope>INVOLVEMENT IN ANXD2</scope>
    <scope>VARIANT ANXD2 GLU-583</scope>
</reference>
<reference key="14">
    <citation type="journal article" date="2011" name="Sci. Signal.">
        <title>System-wide temporal characterization of the proteome and phosphoproteome of human embryonic stem cell differentiation.</title>
        <authorList>
            <person name="Rigbolt K.T."/>
            <person name="Prokhorova T.A."/>
            <person name="Akimov V."/>
            <person name="Henningsen J."/>
            <person name="Johansen P.T."/>
            <person name="Kratchmarova I."/>
            <person name="Kassem M."/>
            <person name="Mann M."/>
            <person name="Olsen J.V."/>
            <person name="Blagoev B."/>
        </authorList>
    </citation>
    <scope>PHOSPHORYLATION [LARGE SCALE ANALYSIS] AT SER-729 AND SER-730</scope>
    <scope>IDENTIFICATION BY MASS SPECTROMETRY [LARGE SCALE ANALYSIS]</scope>
</reference>
<reference key="15">
    <citation type="journal article" date="2013" name="J. Proteome Res.">
        <title>Toward a comprehensive characterization of a human cancer cell phosphoproteome.</title>
        <authorList>
            <person name="Zhou H."/>
            <person name="Di Palma S."/>
            <person name="Preisinger C."/>
            <person name="Peng M."/>
            <person name="Polat A.N."/>
            <person name="Heck A.J."/>
            <person name="Mohammed S."/>
        </authorList>
    </citation>
    <scope>PHOSPHORYLATION [LARGE SCALE ANALYSIS] AT SER-367; SER-584 AND SER-730</scope>
    <scope>IDENTIFICATION BY MASS SPECTROMETRY [LARGE SCALE ANALYSIS]</scope>
    <source>
        <tissue>Erythroleukemia</tissue>
    </source>
</reference>
<reference key="16">
    <citation type="journal article" date="2016" name="Am. J. Med. Genet. A">
        <title>Further evidence of POP1 mutations as the cause of anauxetic dysplasia.</title>
        <authorList>
            <person name="Elalaoui S.C."/>
            <person name="Laarabi F.Z."/>
            <person name="Mansouri M."/>
            <person name="Mrani N.A."/>
            <person name="Nishimura G."/>
            <person name="Sefiani A."/>
        </authorList>
    </citation>
    <scope>INVOLVEMENT IN ANXD2</scope>
    <scope>VARIANT ANXD2 SER-582</scope>
</reference>
<reference key="17">
    <citation type="journal article" date="2017" name="Genes Dev.">
        <title>Targeted CRISPR disruption reveals a role for RNase MRP RNA in human preribosomal RNA processing.</title>
        <authorList>
            <person name="Goldfarb K.C."/>
            <person name="Cech T.R."/>
        </authorList>
    </citation>
    <scope>FUNCTION</scope>
    <scope>SUBUNIT</scope>
</reference>
<reference evidence="10 11" key="18">
    <citation type="journal article" date="2018" name="Cell">
        <title>Cryo-EM Structure of the Human Ribonuclease P Holoenzyme.</title>
        <authorList>
            <person name="Wu J."/>
            <person name="Niu S."/>
            <person name="Tan M."/>
            <person name="Huang C."/>
            <person name="Li M."/>
            <person name="Song Y."/>
            <person name="Wang Q."/>
            <person name="Chen J."/>
            <person name="Shi S."/>
            <person name="Lan P."/>
            <person name="Lei M."/>
        </authorList>
    </citation>
    <scope>STRUCTURE BY ELECTRON MICROSCOPY (3.66 ANGSTROMS) OF RNASE P HOLOENZYME IN COMPLEX WITH TRNA</scope>
    <scope>FUNCTION</scope>
    <scope>SUBUNIT</scope>
</reference>
<reference key="19">
    <citation type="journal article" date="2006" name="Science">
        <title>The consensus coding sequences of human breast and colorectal cancers.</title>
        <authorList>
            <person name="Sjoeblom T."/>
            <person name="Jones S."/>
            <person name="Wood L.D."/>
            <person name="Parsons D.W."/>
            <person name="Lin J."/>
            <person name="Barber T.D."/>
            <person name="Mandelker D."/>
            <person name="Leary R.J."/>
            <person name="Ptak J."/>
            <person name="Silliman N."/>
            <person name="Szabo S."/>
            <person name="Buckhaults P."/>
            <person name="Farrell C."/>
            <person name="Meeh P."/>
            <person name="Markowitz S.D."/>
            <person name="Willis J."/>
            <person name="Dawson D."/>
            <person name="Willson J.K.V."/>
            <person name="Gazdar A.F."/>
            <person name="Hartigan J."/>
            <person name="Wu L."/>
            <person name="Liu C."/>
            <person name="Parmigiani G."/>
            <person name="Park B.H."/>
            <person name="Bachman K.E."/>
            <person name="Papadopoulos N."/>
            <person name="Vogelstein B."/>
            <person name="Kinzler K.W."/>
            <person name="Velculescu V.E."/>
        </authorList>
    </citation>
    <scope>VARIANT [LARGE SCALE ANALYSIS] GLN-675</scope>
</reference>
<reference key="20">
    <citation type="journal article" date="2017" name="Clin. Genet.">
        <title>Broadening the phenotypic spectrum of POP1-skeletal dysplasias: identification of POP1 mutations in a mild and severe skeletal dysplasia.</title>
        <authorList>
            <person name="Barraza-Garcia J."/>
            <person name="Rivera-Pedroza C.I."/>
            <person name="Hisado-Oliva A."/>
            <person name="Belinchon-Martinez A."/>
            <person name="Sentchordi-Montane L."/>
            <person name="Duncan E.L."/>
            <person name="Clark G.R."/>
            <person name="Del Pozo A."/>
            <person name="Ibanez-Garikano K."/>
            <person name="Offiah A."/>
            <person name="Prieto-Matos P."/>
            <person name="Cormier-Daire V."/>
            <person name="Heath K.E."/>
        </authorList>
    </citation>
    <scope>VARIANTS ANXD2 TYR-511 AND SER-582</scope>
</reference>